<gene>
    <name evidence="5" type="primary">hfl1</name>
    <name type="ORF">SPAC30D11.06c</name>
</gene>
<feature type="chain" id="PRO_0000211557" description="Vacuole membrane protein hfl11">
    <location>
        <begin position="1"/>
        <end position="426"/>
    </location>
</feature>
<feature type="transmembrane region" description="Helical" evidence="1">
    <location>
        <begin position="39"/>
        <end position="59"/>
    </location>
</feature>
<feature type="transmembrane region" description="Helical" evidence="1">
    <location>
        <begin position="73"/>
        <end position="93"/>
    </location>
</feature>
<feature type="transmembrane region" description="Helical" evidence="1">
    <location>
        <begin position="133"/>
        <end position="153"/>
    </location>
</feature>
<feature type="transmembrane region" description="Helical" evidence="1">
    <location>
        <begin position="172"/>
        <end position="192"/>
    </location>
</feature>
<feature type="transmembrane region" description="Helical" evidence="1">
    <location>
        <begin position="223"/>
        <end position="243"/>
    </location>
</feature>
<feature type="region of interest" description="ATG8-interacting region" evidence="3 4 7 8">
    <location>
        <begin position="386"/>
        <end position="409"/>
    </location>
</feature>
<feature type="modified residue" description="Phosphoserine" evidence="2">
    <location>
        <position position="364"/>
    </location>
</feature>
<feature type="mutagenesis site" description="Results in a 4-fold decrease in the affinity with atg8." evidence="3">
    <original>F</original>
    <variation>A</variation>
    <location>
        <position position="388"/>
    </location>
</feature>
<feature type="mutagenesis site" description="Moderately reduces the interaction with ATG8." evidence="3">
    <original>D</original>
    <variation>A</variation>
    <location>
        <position position="391"/>
    </location>
</feature>
<feature type="mutagenesis site" description="Moderately reduces the interaction with ATG8." evidence="3">
    <original>E</original>
    <variation>A</variation>
    <location>
        <position position="395"/>
    </location>
</feature>
<feature type="mutagenesis site" description="Results in a 1000-fold decrease in the affinity with atg8." evidence="3">
    <original>Y</original>
    <variation>A</variation>
    <location>
        <position position="398"/>
    </location>
</feature>
<feature type="mutagenesis site" description="Results in a 6-fold decrease in the affinity with atg8." evidence="3">
    <original>Y</original>
    <variation>A</variation>
    <location>
        <position position="409"/>
    </location>
</feature>
<feature type="mutagenesis site" description="Results in a 24-fold decrease in the affinity with atg8." evidence="3">
    <original>Y</original>
    <variation>A</variation>
    <location>
        <position position="411"/>
    </location>
</feature>
<feature type="turn" evidence="9">
    <location>
        <begin position="392"/>
        <end position="394"/>
    </location>
</feature>
<feature type="helix" evidence="9">
    <location>
        <begin position="395"/>
        <end position="401"/>
    </location>
</feature>
<sequence>MDNEIVALCGFFVAIALVLSCISIITHLKNYKKPVLQRSVVRILMMIVIYSSVSFLSVYNEKIGSIFEPFREIYEAFALYCFFCLLIDYLGGERAAVISLHGHLPRPRLWPLNYLQDDIDLSDPYTFLSIKRGILQYTWLKPFLVIAVLLTKVTGVYDREDQPVYASADLWIGLVYNISITLSLYSLTTFWVCLHEELAPFRPFPKFLSVKAIIFASYWQQTVLSITNWLGLLNGTGWIYSLLNQNVLMCLEMPFFALSHWYAFRIEDYDTPTWLSCARLPLLKAFKDVIGLKDVWCDSLQTLHGDRYVYQNFEPGENLIPSRNDGRINRTSHGLRYSQGGQSKYWISRYDQSRVRLINNSQNSPQSNKSYFSIPGMSTSHFENGLQFEIDDEMEPLYNQAKQMRYGDYNYPVLLVNNTHASSSYT</sequence>
<name>HFL1_SCHPO</name>
<accession>Q09906</accession>
<organism>
    <name type="scientific">Schizosaccharomyces pombe (strain 972 / ATCC 24843)</name>
    <name type="common">Fission yeast</name>
    <dbReference type="NCBI Taxonomy" id="284812"/>
    <lineage>
        <taxon>Eukaryota</taxon>
        <taxon>Fungi</taxon>
        <taxon>Dikarya</taxon>
        <taxon>Ascomycota</taxon>
        <taxon>Taphrinomycotina</taxon>
        <taxon>Schizosaccharomycetes</taxon>
        <taxon>Schizosaccharomycetales</taxon>
        <taxon>Schizosaccharomycetaceae</taxon>
        <taxon>Schizosaccharomyces</taxon>
    </lineage>
</organism>
<evidence type="ECO:0000255" key="1"/>
<evidence type="ECO:0000269" key="2">
    <source>
    </source>
</evidence>
<evidence type="ECO:0000269" key="3">
    <source>
    </source>
</evidence>
<evidence type="ECO:0000269" key="4">
    <source>
    </source>
</evidence>
<evidence type="ECO:0000303" key="5">
    <source>
    </source>
</evidence>
<evidence type="ECO:0000305" key="6"/>
<evidence type="ECO:0007744" key="7">
    <source>
        <dbReference type="PDB" id="6AAF"/>
    </source>
</evidence>
<evidence type="ECO:0007744" key="8">
    <source>
        <dbReference type="PDB" id="7YO8"/>
    </source>
</evidence>
<evidence type="ECO:0007829" key="9">
    <source>
        <dbReference type="PDB" id="7YO8"/>
    </source>
</evidence>
<keyword id="KW-0002">3D-structure</keyword>
<keyword id="KW-0472">Membrane</keyword>
<keyword id="KW-0597">Phosphoprotein</keyword>
<keyword id="KW-1185">Reference proteome</keyword>
<keyword id="KW-0812">Transmembrane</keyword>
<keyword id="KW-1133">Transmembrane helix</keyword>
<keyword id="KW-0926">Vacuole</keyword>
<reference key="1">
    <citation type="journal article" date="2002" name="Nature">
        <title>The genome sequence of Schizosaccharomyces pombe.</title>
        <authorList>
            <person name="Wood V."/>
            <person name="Gwilliam R."/>
            <person name="Rajandream M.A."/>
            <person name="Lyne M.H."/>
            <person name="Lyne R."/>
            <person name="Stewart A."/>
            <person name="Sgouros J.G."/>
            <person name="Peat N."/>
            <person name="Hayles J."/>
            <person name="Baker S.G."/>
            <person name="Basham D."/>
            <person name="Bowman S."/>
            <person name="Brooks K."/>
            <person name="Brown D."/>
            <person name="Brown S."/>
            <person name="Chillingworth T."/>
            <person name="Churcher C.M."/>
            <person name="Collins M."/>
            <person name="Connor R."/>
            <person name="Cronin A."/>
            <person name="Davis P."/>
            <person name="Feltwell T."/>
            <person name="Fraser A."/>
            <person name="Gentles S."/>
            <person name="Goble A."/>
            <person name="Hamlin N."/>
            <person name="Harris D.E."/>
            <person name="Hidalgo J."/>
            <person name="Hodgson G."/>
            <person name="Holroyd S."/>
            <person name="Hornsby T."/>
            <person name="Howarth S."/>
            <person name="Huckle E.J."/>
            <person name="Hunt S."/>
            <person name="Jagels K."/>
            <person name="James K.D."/>
            <person name="Jones L."/>
            <person name="Jones M."/>
            <person name="Leather S."/>
            <person name="McDonald S."/>
            <person name="McLean J."/>
            <person name="Mooney P."/>
            <person name="Moule S."/>
            <person name="Mungall K.L."/>
            <person name="Murphy L.D."/>
            <person name="Niblett D."/>
            <person name="Odell C."/>
            <person name="Oliver K."/>
            <person name="O'Neil S."/>
            <person name="Pearson D."/>
            <person name="Quail M.A."/>
            <person name="Rabbinowitsch E."/>
            <person name="Rutherford K.M."/>
            <person name="Rutter S."/>
            <person name="Saunders D."/>
            <person name="Seeger K."/>
            <person name="Sharp S."/>
            <person name="Skelton J."/>
            <person name="Simmonds M.N."/>
            <person name="Squares R."/>
            <person name="Squares S."/>
            <person name="Stevens K."/>
            <person name="Taylor K."/>
            <person name="Taylor R.G."/>
            <person name="Tivey A."/>
            <person name="Walsh S.V."/>
            <person name="Warren T."/>
            <person name="Whitehead S."/>
            <person name="Woodward J.R."/>
            <person name="Volckaert G."/>
            <person name="Aert R."/>
            <person name="Robben J."/>
            <person name="Grymonprez B."/>
            <person name="Weltjens I."/>
            <person name="Vanstreels E."/>
            <person name="Rieger M."/>
            <person name="Schaefer M."/>
            <person name="Mueller-Auer S."/>
            <person name="Gabel C."/>
            <person name="Fuchs M."/>
            <person name="Duesterhoeft A."/>
            <person name="Fritzc C."/>
            <person name="Holzer E."/>
            <person name="Moestl D."/>
            <person name="Hilbert H."/>
            <person name="Borzym K."/>
            <person name="Langer I."/>
            <person name="Beck A."/>
            <person name="Lehrach H."/>
            <person name="Reinhardt R."/>
            <person name="Pohl T.M."/>
            <person name="Eger P."/>
            <person name="Zimmermann W."/>
            <person name="Wedler H."/>
            <person name="Wambutt R."/>
            <person name="Purnelle B."/>
            <person name="Goffeau A."/>
            <person name="Cadieu E."/>
            <person name="Dreano S."/>
            <person name="Gloux S."/>
            <person name="Lelaure V."/>
            <person name="Mottier S."/>
            <person name="Galibert F."/>
            <person name="Aves S.J."/>
            <person name="Xiang Z."/>
            <person name="Hunt C."/>
            <person name="Moore K."/>
            <person name="Hurst S.M."/>
            <person name="Lucas M."/>
            <person name="Rochet M."/>
            <person name="Gaillardin C."/>
            <person name="Tallada V.A."/>
            <person name="Garzon A."/>
            <person name="Thode G."/>
            <person name="Daga R.R."/>
            <person name="Cruzado L."/>
            <person name="Jimenez J."/>
            <person name="Sanchez M."/>
            <person name="del Rey F."/>
            <person name="Benito J."/>
            <person name="Dominguez A."/>
            <person name="Revuelta J.L."/>
            <person name="Moreno S."/>
            <person name="Armstrong J."/>
            <person name="Forsburg S.L."/>
            <person name="Cerutti L."/>
            <person name="Lowe T."/>
            <person name="McCombie W.R."/>
            <person name="Paulsen I."/>
            <person name="Potashkin J."/>
            <person name="Shpakovski G.V."/>
            <person name="Ussery D."/>
            <person name="Barrell B.G."/>
            <person name="Nurse P."/>
        </authorList>
    </citation>
    <scope>NUCLEOTIDE SEQUENCE [LARGE SCALE GENOMIC DNA]</scope>
    <source>
        <strain>972 / ATCC 24843</strain>
    </source>
</reference>
<reference key="2">
    <citation type="journal article" date="2008" name="J. Proteome Res.">
        <title>Phosphoproteome analysis of fission yeast.</title>
        <authorList>
            <person name="Wilson-Grady J.T."/>
            <person name="Villen J."/>
            <person name="Gygi S.P."/>
        </authorList>
    </citation>
    <scope>PHOSPHORYLATION [LARGE SCALE ANALYSIS] AT SER-364</scope>
    <scope>IDENTIFICATION BY MASS SPECTROMETRY</scope>
</reference>
<reference evidence="7" key="3">
    <citation type="journal article" date="2018" name="Elife">
        <title>Lipidation-independent vacuolar functions of Atg8 rely on its noncanonical interaction with a vacuole membrane protein.</title>
        <authorList>
            <person name="Liu X.M."/>
            <person name="Yamasaki A."/>
            <person name="Du X.M."/>
            <person name="Coffman V.C."/>
            <person name="Ohsumi Y."/>
            <person name="Nakatogawa H."/>
            <person name="Wu J.Q."/>
            <person name="Noda N.N."/>
            <person name="Du L.L."/>
        </authorList>
    </citation>
    <scope>X-RAY CRYSTALLOGRAPHY (2.20 ANGSTROMS) OF 386-409</scope>
    <scope>FUNCTION</scope>
    <scope>INTERACTION WITH ATG8</scope>
    <scope>SUBCELLULAR LOCATION</scope>
    <scope>DISRUPTION PHENOTYPE</scope>
    <scope>DOMAIN</scope>
    <scope>MUTAGENESIS OF PHE-388; ASP-391; GLU-395; TYR-398; TYR-409 AND TYR-411</scope>
</reference>
<reference evidence="8" key="4">
    <citation type="journal article" date="2023" name="Autophagy">
        <title>Development of new tools to study membrane-anchored mammalian Atg8 proteins.</title>
        <authorList>
            <person name="Park S.W."/>
            <person name="Jeon P."/>
            <person name="Yamasaki A."/>
            <person name="Lee H.E."/>
            <person name="Choi H."/>
            <person name="Mun J.Y."/>
            <person name="Jun Y.W."/>
            <person name="Park J.H."/>
            <person name="Lee S.H."/>
            <person name="Lee S.K."/>
            <person name="Lee Y.K."/>
            <person name="Song H.K."/>
            <person name="Lazarou M."/>
            <person name="Cho D.H."/>
            <person name="Komatsu M."/>
            <person name="Noda N.N."/>
            <person name="Jang D.J."/>
            <person name="Lee J.A."/>
        </authorList>
    </citation>
    <scope>X-RAY CRYSTALLOGRAPHY (1.80 ANGSTROMS) OF 386-409</scope>
    <scope>DOMAIN</scope>
</reference>
<protein>
    <recommendedName>
        <fullName evidence="5">Vacuole membrane protein hfl11</fullName>
    </recommendedName>
</protein>
<dbReference type="EMBL" id="CU329670">
    <property type="protein sequence ID" value="CAA91892.1"/>
    <property type="molecule type" value="Genomic_DNA"/>
</dbReference>
<dbReference type="PIR" id="T38593">
    <property type="entry name" value="S62564"/>
</dbReference>
<dbReference type="RefSeq" id="NP_593211.1">
    <property type="nucleotide sequence ID" value="NM_001018607.2"/>
</dbReference>
<dbReference type="PDB" id="6AAF">
    <property type="method" value="X-ray"/>
    <property type="resolution" value="2.20 A"/>
    <property type="chains" value="B=386-409"/>
</dbReference>
<dbReference type="PDB" id="7YO8">
    <property type="method" value="X-ray"/>
    <property type="resolution" value="1.80 A"/>
    <property type="chains" value="A=386-409"/>
</dbReference>
<dbReference type="PDBsum" id="6AAF"/>
<dbReference type="PDBsum" id="7YO8"/>
<dbReference type="SMR" id="Q09906"/>
<dbReference type="BioGRID" id="279501">
    <property type="interactions" value="2"/>
</dbReference>
<dbReference type="FunCoup" id="Q09906">
    <property type="interactions" value="181"/>
</dbReference>
<dbReference type="STRING" id="284812.Q09906"/>
<dbReference type="TCDB" id="2.A.82.1.8">
    <property type="family name" value="the organic solute transporter (ost) family"/>
</dbReference>
<dbReference type="iPTMnet" id="Q09906"/>
<dbReference type="PaxDb" id="4896-SPAC30D11.06c.1"/>
<dbReference type="EnsemblFungi" id="SPAC30D11.06c.1">
    <property type="protein sequence ID" value="SPAC30D11.06c.1:pep"/>
    <property type="gene ID" value="SPAC30D11.06c"/>
</dbReference>
<dbReference type="GeneID" id="2543068"/>
<dbReference type="KEGG" id="spo:2543068"/>
<dbReference type="PomBase" id="SPAC30D11.06c">
    <property type="gene designation" value="hfl1"/>
</dbReference>
<dbReference type="VEuPathDB" id="FungiDB:SPAC30D11.06c"/>
<dbReference type="eggNOG" id="KOG2641">
    <property type="taxonomic scope" value="Eukaryota"/>
</dbReference>
<dbReference type="HOGENOM" id="CLU_012923_4_0_1"/>
<dbReference type="InParanoid" id="Q09906"/>
<dbReference type="OMA" id="AFAIAHW"/>
<dbReference type="PhylomeDB" id="Q09906"/>
<dbReference type="PRO" id="PR:Q09906"/>
<dbReference type="Proteomes" id="UP000002485">
    <property type="component" value="Chromosome I"/>
</dbReference>
<dbReference type="GO" id="GO:0000329">
    <property type="term" value="C:fungal-type vacuole membrane"/>
    <property type="evidence" value="ECO:0000269"/>
    <property type="project" value="PomBase"/>
</dbReference>
<dbReference type="GO" id="GO:0016020">
    <property type="term" value="C:membrane"/>
    <property type="evidence" value="ECO:0000318"/>
    <property type="project" value="GO_Central"/>
</dbReference>
<dbReference type="GO" id="GO:0022857">
    <property type="term" value="F:transmembrane transporter activity"/>
    <property type="evidence" value="ECO:0000318"/>
    <property type="project" value="GO_Central"/>
</dbReference>
<dbReference type="GO" id="GO:0055085">
    <property type="term" value="P:transmembrane transport"/>
    <property type="evidence" value="ECO:0000255"/>
    <property type="project" value="PomBase"/>
</dbReference>
<dbReference type="GO" id="GO:0007033">
    <property type="term" value="P:vacuole organization"/>
    <property type="evidence" value="ECO:0000315"/>
    <property type="project" value="PomBase"/>
</dbReference>
<dbReference type="InterPro" id="IPR005178">
    <property type="entry name" value="Ostalpha/TMEM184C"/>
</dbReference>
<dbReference type="PANTHER" id="PTHR23423">
    <property type="entry name" value="ORGANIC SOLUTE TRANSPORTER-RELATED"/>
    <property type="match status" value="1"/>
</dbReference>
<dbReference type="Pfam" id="PF03619">
    <property type="entry name" value="Solute_trans_a"/>
    <property type="match status" value="1"/>
</dbReference>
<dbReference type="SMART" id="SM01417">
    <property type="entry name" value="Solute_trans_a"/>
    <property type="match status" value="1"/>
</dbReference>
<proteinExistence type="evidence at protein level"/>
<comment type="function">
    <text evidence="3">Vacuole membrane protein that recruits ATG8 to facilitate the degradation of vacuolar integral membrane proteins during early-stationary vacuole turnover (EVT) when cells enter stationary phase.</text>
</comment>
<comment type="subunit">
    <text evidence="3">Interacts with atg8.</text>
</comment>
<comment type="subcellular location">
    <subcellularLocation>
        <location evidence="3">Vacuole membrane</location>
        <topology evidence="1">Multi-pass membrane protein</topology>
    </subcellularLocation>
</comment>
<comment type="disruption phenotype">
    <text evidence="3">Abolishes the vacuolar membrane localization of atg8.</text>
</comment>
<comment type="similarity">
    <text evidence="6">Belongs to the TMEM184 family.</text>
</comment>